<dbReference type="PIR" id="A01907">
    <property type="entry name" value="K2DGGM"/>
</dbReference>
<dbReference type="SMR" id="P01618"/>
<dbReference type="FunCoup" id="P01618">
    <property type="interactions" value="2"/>
</dbReference>
<dbReference type="InParanoid" id="P01618"/>
<dbReference type="Proteomes" id="UP000002254">
    <property type="component" value="Unplaced"/>
</dbReference>
<dbReference type="Proteomes" id="UP000694429">
    <property type="component" value="Unplaced"/>
</dbReference>
<dbReference type="Proteomes" id="UP000694542">
    <property type="component" value="Unplaced"/>
</dbReference>
<dbReference type="Proteomes" id="UP000805418">
    <property type="component" value="Unplaced"/>
</dbReference>
<dbReference type="GO" id="GO:0019814">
    <property type="term" value="C:immunoglobulin complex"/>
    <property type="evidence" value="ECO:0000318"/>
    <property type="project" value="GO_Central"/>
</dbReference>
<dbReference type="GO" id="GO:0002250">
    <property type="term" value="P:adaptive immune response"/>
    <property type="evidence" value="ECO:0007669"/>
    <property type="project" value="UniProtKB-KW"/>
</dbReference>
<dbReference type="GO" id="GO:0006955">
    <property type="term" value="P:immune response"/>
    <property type="evidence" value="ECO:0000318"/>
    <property type="project" value="GO_Central"/>
</dbReference>
<dbReference type="CDD" id="cd04980">
    <property type="entry name" value="IgV_L_kappa"/>
    <property type="match status" value="1"/>
</dbReference>
<dbReference type="FunFam" id="2.60.40.10:FF:002747">
    <property type="entry name" value="Ig kappa chain V region GOM"/>
    <property type="match status" value="1"/>
</dbReference>
<dbReference type="Gene3D" id="2.60.40.10">
    <property type="entry name" value="Immunoglobulins"/>
    <property type="match status" value="1"/>
</dbReference>
<dbReference type="InterPro" id="IPR007110">
    <property type="entry name" value="Ig-like_dom"/>
</dbReference>
<dbReference type="InterPro" id="IPR036179">
    <property type="entry name" value="Ig-like_dom_sf"/>
</dbReference>
<dbReference type="InterPro" id="IPR013783">
    <property type="entry name" value="Ig-like_fold"/>
</dbReference>
<dbReference type="InterPro" id="IPR003599">
    <property type="entry name" value="Ig_sub"/>
</dbReference>
<dbReference type="InterPro" id="IPR013106">
    <property type="entry name" value="Ig_V-set"/>
</dbReference>
<dbReference type="InterPro" id="IPR050150">
    <property type="entry name" value="IgV_Light_Chain"/>
</dbReference>
<dbReference type="PANTHER" id="PTHR23267">
    <property type="entry name" value="IMMUNOGLOBULIN LIGHT CHAIN"/>
    <property type="match status" value="1"/>
</dbReference>
<dbReference type="Pfam" id="PF07686">
    <property type="entry name" value="V-set"/>
    <property type="match status" value="1"/>
</dbReference>
<dbReference type="SMART" id="SM00409">
    <property type="entry name" value="IG"/>
    <property type="match status" value="1"/>
</dbReference>
<dbReference type="SMART" id="SM00406">
    <property type="entry name" value="IGv"/>
    <property type="match status" value="1"/>
</dbReference>
<dbReference type="SUPFAM" id="SSF48726">
    <property type="entry name" value="Immunoglobulin"/>
    <property type="match status" value="1"/>
</dbReference>
<dbReference type="PROSITE" id="PS50835">
    <property type="entry name" value="IG_LIKE"/>
    <property type="match status" value="1"/>
</dbReference>
<comment type="miscellaneous">
    <text>Peptides were aligned by homology with human kappa chains.</text>
</comment>
<name>KV1_CANLF</name>
<sequence>DIVMTQTPLSLSVSPGEPASISCRSSQSNLDYLNWYLQKAGQSPRLLPEQDSQRASGVPDRFSGSGSGTDFTLRIGRVEAEDAGIYYCMQRSFYPYTFGQGTRLEVRR</sequence>
<accession>P01618</accession>
<reference key="1">
    <citation type="journal article" date="1978" name="Immunochemistry">
        <title>The amino acid sequence of the light chain variable region of a canine myeloma immunoglobulin: evidence that the VK subgroups predated mammalian speciation.</title>
        <authorList>
            <person name="Wasserman R.L."/>
            <person name="Capra J.D."/>
        </authorList>
    </citation>
    <scope>PROTEIN SEQUENCE</scope>
</reference>
<proteinExistence type="evidence at protein level"/>
<keyword id="KW-1064">Adaptive immunity</keyword>
<keyword id="KW-0903">Direct protein sequencing</keyword>
<keyword id="KW-1015">Disulfide bond</keyword>
<keyword id="KW-0391">Immunity</keyword>
<keyword id="KW-1280">Immunoglobulin</keyword>
<keyword id="KW-1185">Reference proteome</keyword>
<protein>
    <recommendedName>
        <fullName>Ig kappa chain V region GOM</fullName>
    </recommendedName>
</protein>
<evidence type="ECO:0000255" key="1">
    <source>
        <dbReference type="PROSITE-ProRule" id="PRU00114"/>
    </source>
</evidence>
<evidence type="ECO:0000256" key="2">
    <source>
        <dbReference type="SAM" id="MobiDB-lite"/>
    </source>
</evidence>
<feature type="chain" id="PRO_0000059719" description="Ig kappa chain V region GOM">
    <location>
        <begin position="1"/>
        <end position="108" status="greater than"/>
    </location>
</feature>
<feature type="region of interest" description="Framework-1">
    <location>
        <begin position="1"/>
        <end position="23"/>
    </location>
</feature>
<feature type="region of interest" description="Complementarity-determining-1">
    <location>
        <begin position="24"/>
        <end position="34"/>
    </location>
</feature>
<feature type="region of interest" description="Framework-2">
    <location>
        <begin position="35"/>
        <end position="49"/>
    </location>
</feature>
<feature type="region of interest" description="Disordered" evidence="2">
    <location>
        <begin position="44"/>
        <end position="66"/>
    </location>
</feature>
<feature type="region of interest" description="Complementarity-determining-2">
    <location>
        <begin position="50"/>
        <end position="56"/>
    </location>
</feature>
<feature type="region of interest" description="Framework-3">
    <location>
        <begin position="57"/>
        <end position="88"/>
    </location>
</feature>
<feature type="region of interest" description="Complementarity-determining-3">
    <location>
        <begin position="89"/>
        <end position="97"/>
    </location>
</feature>
<feature type="region of interest" description="Framework-4">
    <location>
        <begin position="98"/>
        <end position="107"/>
    </location>
</feature>
<feature type="disulfide bond" evidence="1">
    <location>
        <begin position="23"/>
        <end position="88"/>
    </location>
</feature>
<feature type="non-terminal residue">
    <location>
        <position position="108"/>
    </location>
</feature>
<organism>
    <name type="scientific">Canis lupus familiaris</name>
    <name type="common">Dog</name>
    <name type="synonym">Canis familiaris</name>
    <dbReference type="NCBI Taxonomy" id="9615"/>
    <lineage>
        <taxon>Eukaryota</taxon>
        <taxon>Metazoa</taxon>
        <taxon>Chordata</taxon>
        <taxon>Craniata</taxon>
        <taxon>Vertebrata</taxon>
        <taxon>Euteleostomi</taxon>
        <taxon>Mammalia</taxon>
        <taxon>Eutheria</taxon>
        <taxon>Laurasiatheria</taxon>
        <taxon>Carnivora</taxon>
        <taxon>Caniformia</taxon>
        <taxon>Canidae</taxon>
        <taxon>Canis</taxon>
    </lineage>
</organism>